<keyword id="KW-0687">Ribonucleoprotein</keyword>
<keyword id="KW-0689">Ribosomal protein</keyword>
<keyword id="KW-0694">RNA-binding</keyword>
<keyword id="KW-0699">rRNA-binding</keyword>
<organism>
    <name type="scientific">Methylorubrum extorquens (strain CM4 / NCIMB 13688)</name>
    <name type="common">Methylobacterium extorquens</name>
    <dbReference type="NCBI Taxonomy" id="440085"/>
    <lineage>
        <taxon>Bacteria</taxon>
        <taxon>Pseudomonadati</taxon>
        <taxon>Pseudomonadota</taxon>
        <taxon>Alphaproteobacteria</taxon>
        <taxon>Hyphomicrobiales</taxon>
        <taxon>Methylobacteriaceae</taxon>
        <taxon>Methylorubrum</taxon>
    </lineage>
</organism>
<protein>
    <recommendedName>
        <fullName evidence="1">Small ribosomal subunit protein uS5</fullName>
    </recommendedName>
    <alternativeName>
        <fullName evidence="3">30S ribosomal protein S5</fullName>
    </alternativeName>
</protein>
<comment type="function">
    <text evidence="1">With S4 and S12 plays an important role in translational accuracy.</text>
</comment>
<comment type="function">
    <text evidence="1">Located at the back of the 30S subunit body where it stabilizes the conformation of the head with respect to the body.</text>
</comment>
<comment type="subunit">
    <text evidence="1">Part of the 30S ribosomal subunit. Contacts proteins S4 and S8.</text>
</comment>
<comment type="domain">
    <text>The N-terminal domain interacts with the head of the 30S subunit; the C-terminal domain interacts with the body and contacts protein S4. The interaction surface between S4 and S5 is involved in control of translational fidelity.</text>
</comment>
<comment type="similarity">
    <text evidence="1">Belongs to the universal ribosomal protein uS5 family.</text>
</comment>
<gene>
    <name evidence="1" type="primary">rpsE</name>
    <name type="ordered locus">Mchl_2462</name>
</gene>
<dbReference type="EMBL" id="CP001298">
    <property type="protein sequence ID" value="ACK83304.1"/>
    <property type="molecule type" value="Genomic_DNA"/>
</dbReference>
<dbReference type="RefSeq" id="WP_012253652.1">
    <property type="nucleotide sequence ID" value="NC_011757.1"/>
</dbReference>
<dbReference type="SMR" id="B7L0T3"/>
<dbReference type="GeneID" id="72989872"/>
<dbReference type="KEGG" id="mch:Mchl_2462"/>
<dbReference type="HOGENOM" id="CLU_065898_2_2_5"/>
<dbReference type="Proteomes" id="UP000002385">
    <property type="component" value="Chromosome"/>
</dbReference>
<dbReference type="GO" id="GO:0015935">
    <property type="term" value="C:small ribosomal subunit"/>
    <property type="evidence" value="ECO:0007669"/>
    <property type="project" value="InterPro"/>
</dbReference>
<dbReference type="GO" id="GO:0019843">
    <property type="term" value="F:rRNA binding"/>
    <property type="evidence" value="ECO:0007669"/>
    <property type="project" value="UniProtKB-UniRule"/>
</dbReference>
<dbReference type="GO" id="GO:0003735">
    <property type="term" value="F:structural constituent of ribosome"/>
    <property type="evidence" value="ECO:0007669"/>
    <property type="project" value="InterPro"/>
</dbReference>
<dbReference type="GO" id="GO:0006412">
    <property type="term" value="P:translation"/>
    <property type="evidence" value="ECO:0007669"/>
    <property type="project" value="UniProtKB-UniRule"/>
</dbReference>
<dbReference type="FunFam" id="3.30.160.20:FF:000001">
    <property type="entry name" value="30S ribosomal protein S5"/>
    <property type="match status" value="1"/>
</dbReference>
<dbReference type="FunFam" id="3.30.230.10:FF:000002">
    <property type="entry name" value="30S ribosomal protein S5"/>
    <property type="match status" value="1"/>
</dbReference>
<dbReference type="Gene3D" id="3.30.160.20">
    <property type="match status" value="1"/>
</dbReference>
<dbReference type="Gene3D" id="3.30.230.10">
    <property type="match status" value="1"/>
</dbReference>
<dbReference type="HAMAP" id="MF_01307_B">
    <property type="entry name" value="Ribosomal_uS5_B"/>
    <property type="match status" value="1"/>
</dbReference>
<dbReference type="InterPro" id="IPR020568">
    <property type="entry name" value="Ribosomal_Su5_D2-typ_SF"/>
</dbReference>
<dbReference type="InterPro" id="IPR000851">
    <property type="entry name" value="Ribosomal_uS5"/>
</dbReference>
<dbReference type="InterPro" id="IPR005712">
    <property type="entry name" value="Ribosomal_uS5_bac-type"/>
</dbReference>
<dbReference type="InterPro" id="IPR005324">
    <property type="entry name" value="Ribosomal_uS5_C"/>
</dbReference>
<dbReference type="InterPro" id="IPR013810">
    <property type="entry name" value="Ribosomal_uS5_N"/>
</dbReference>
<dbReference type="InterPro" id="IPR018192">
    <property type="entry name" value="Ribosomal_uS5_N_CS"/>
</dbReference>
<dbReference type="InterPro" id="IPR014721">
    <property type="entry name" value="Ribsml_uS5_D2-typ_fold_subgr"/>
</dbReference>
<dbReference type="NCBIfam" id="TIGR01021">
    <property type="entry name" value="rpsE_bact"/>
    <property type="match status" value="1"/>
</dbReference>
<dbReference type="PANTHER" id="PTHR48277">
    <property type="entry name" value="MITOCHONDRIAL RIBOSOMAL PROTEIN S5"/>
    <property type="match status" value="1"/>
</dbReference>
<dbReference type="PANTHER" id="PTHR48277:SF1">
    <property type="entry name" value="MITOCHONDRIAL RIBOSOMAL PROTEIN S5"/>
    <property type="match status" value="1"/>
</dbReference>
<dbReference type="Pfam" id="PF00333">
    <property type="entry name" value="Ribosomal_S5"/>
    <property type="match status" value="1"/>
</dbReference>
<dbReference type="Pfam" id="PF03719">
    <property type="entry name" value="Ribosomal_S5_C"/>
    <property type="match status" value="1"/>
</dbReference>
<dbReference type="SUPFAM" id="SSF54768">
    <property type="entry name" value="dsRNA-binding domain-like"/>
    <property type="match status" value="1"/>
</dbReference>
<dbReference type="SUPFAM" id="SSF54211">
    <property type="entry name" value="Ribosomal protein S5 domain 2-like"/>
    <property type="match status" value="1"/>
</dbReference>
<dbReference type="PROSITE" id="PS00585">
    <property type="entry name" value="RIBOSOMAL_S5"/>
    <property type="match status" value="1"/>
</dbReference>
<dbReference type="PROSITE" id="PS50881">
    <property type="entry name" value="S5_DSRBD"/>
    <property type="match status" value="1"/>
</dbReference>
<feature type="chain" id="PRO_1000165453" description="Small ribosomal subunit protein uS5">
    <location>
        <begin position="1"/>
        <end position="192"/>
    </location>
</feature>
<feature type="domain" description="S5 DRBM" evidence="1">
    <location>
        <begin position="20"/>
        <end position="83"/>
    </location>
</feature>
<feature type="region of interest" description="Disordered" evidence="2">
    <location>
        <begin position="162"/>
        <end position="192"/>
    </location>
</feature>
<accession>B7L0T3</accession>
<evidence type="ECO:0000255" key="1">
    <source>
        <dbReference type="HAMAP-Rule" id="MF_01307"/>
    </source>
</evidence>
<evidence type="ECO:0000256" key="2">
    <source>
        <dbReference type="SAM" id="MobiDB-lite"/>
    </source>
</evidence>
<evidence type="ECO:0000305" key="3"/>
<reference key="1">
    <citation type="submission" date="2008-12" db="EMBL/GenBank/DDBJ databases">
        <title>Complete sequence of chromosome of Methylobacterium chloromethanicum CM4.</title>
        <authorList>
            <consortium name="US DOE Joint Genome Institute"/>
            <person name="Lucas S."/>
            <person name="Copeland A."/>
            <person name="Lapidus A."/>
            <person name="Glavina del Rio T."/>
            <person name="Dalin E."/>
            <person name="Tice H."/>
            <person name="Bruce D."/>
            <person name="Goodwin L."/>
            <person name="Pitluck S."/>
            <person name="Chertkov O."/>
            <person name="Brettin T."/>
            <person name="Detter J.C."/>
            <person name="Han C."/>
            <person name="Larimer F."/>
            <person name="Land M."/>
            <person name="Hauser L."/>
            <person name="Kyrpides N."/>
            <person name="Mikhailova N."/>
            <person name="Marx C."/>
            <person name="Richardson P."/>
        </authorList>
    </citation>
    <scope>NUCLEOTIDE SEQUENCE [LARGE SCALE GENOMIC DNA]</scope>
    <source>
        <strain>CM4 / NCIMB 13688</strain>
    </source>
</reference>
<proteinExistence type="inferred from homology"/>
<sequence length="192" mass="20823">MAREREGRRRDDREERDSEFVDKLVHINRVAKVVKGGRRFGFAALVVVGDQKGRVGFGHGKAREVPEAIRKATEAAKRGLIRVSLREGRTLHHDVNGRHGAGKVILRAAPQGTGIIAGGPMRAVFETLGMQDVVAKSLGSSNPYNLVRATFDALKNEDSPRSVAARRGLKVSALQARRRDADPADTSEAAVA</sequence>
<name>RS5_METC4</name>